<gene>
    <name type="primary">hupK</name>
</gene>
<reference key="1">
    <citation type="journal article" date="1991" name="J. Bacteriol.">
        <title>Clustering of genes necessary for hydrogen oxidation in Rhodobacter capsulatus.</title>
        <authorList>
            <person name="Xu H.-W."/>
            <person name="Wall J.D."/>
        </authorList>
    </citation>
    <scope>NUCLEOTIDE SEQUENCE [GENOMIC DNA]</scope>
</reference>
<reference key="2">
    <citation type="journal article" date="1993" name="Mol. Microbiol.">
        <title>Organization of the genes necessary for hydrogenase expression in Rhodobacter capsulatus. Sequence analysis and identification of two hyp regulatory mutants.</title>
        <authorList>
            <person name="Colbeau A."/>
            <person name="Richaud P."/>
            <person name="Toussaint B."/>
            <person name="Caballero F.J."/>
            <person name="Elster C."/>
            <person name="Delphin C."/>
            <person name="Smith R.L."/>
            <person name="Chabert J."/>
            <person name="Vignais P.M."/>
        </authorList>
    </citation>
    <scope>NUCLEOTIDE SEQUENCE [GENOMIC DNA]</scope>
    <source>
        <strain>ATCC 33303 / B10</strain>
    </source>
</reference>
<name>HUPK_RHOCA</name>
<evidence type="ECO:0000305" key="1"/>
<accession>P30797</accession>
<feature type="chain" id="PRO_0000201433" description="Hydrogenase expression/formation protein HupK">
    <location>
        <begin position="1"/>
        <end position="294"/>
    </location>
</feature>
<feature type="sequence conflict" description="In Ref. 2; CAA78803." evidence="1" ref="2">
    <original>A</original>
    <variation>R</variation>
    <location>
        <position position="70"/>
    </location>
</feature>
<protein>
    <recommendedName>
        <fullName>Hydrogenase expression/formation protein HupK</fullName>
    </recommendedName>
</protein>
<dbReference type="EMBL" id="M55089">
    <property type="protein sequence ID" value="AAA72924.1"/>
    <property type="molecule type" value="Genomic_DNA"/>
</dbReference>
<dbReference type="EMBL" id="Z15089">
    <property type="protein sequence ID" value="CAA78803.1"/>
    <property type="molecule type" value="Genomic_DNA"/>
</dbReference>
<dbReference type="PIR" id="S32947">
    <property type="entry name" value="S32947"/>
</dbReference>
<dbReference type="RefSeq" id="WP_013066519.1">
    <property type="nucleotide sequence ID" value="NZ_VIBE01000017.1"/>
</dbReference>
<dbReference type="GeneID" id="31489717"/>
<dbReference type="OMA" id="WGRGPLW"/>
<dbReference type="Gene3D" id="1.10.645.10">
    <property type="entry name" value="Cytochrome-c3 Hydrogenase, chain B"/>
    <property type="match status" value="1"/>
</dbReference>
<dbReference type="InterPro" id="IPR029014">
    <property type="entry name" value="NiFe-Hase_large"/>
</dbReference>
<dbReference type="SUPFAM" id="SSF56762">
    <property type="entry name" value="HydB/Nqo4-like"/>
    <property type="match status" value="1"/>
</dbReference>
<organism>
    <name type="scientific">Rhodobacter capsulatus</name>
    <name type="common">Rhodopseudomonas capsulata</name>
    <dbReference type="NCBI Taxonomy" id="1061"/>
    <lineage>
        <taxon>Bacteria</taxon>
        <taxon>Pseudomonadati</taxon>
        <taxon>Pseudomonadota</taxon>
        <taxon>Alphaproteobacteria</taxon>
        <taxon>Rhodobacterales</taxon>
        <taxon>Rhodobacter group</taxon>
        <taxon>Rhodobacter</taxon>
    </lineage>
</organism>
<proteinExistence type="inferred from homology"/>
<sequence>MSAALGIVLRPEGQRLAVSLTPPDPLPVAALLLGKPPGQVAELLPRLFNLCGAAQGHAARLALGLPAEAAPARREILRDHLAKLCLIWPKLLGLAPQPLPEHWAEGGAALQHWLWGGAKPADLWPFLTSGQGVAPLLATLGHAFAPGEAVAVLPPLSDPMALTAQENSPAGRVADDPLMRQAEARFGRGPFWRALGRIVDLHAFALAPPAAATPRPGLALVAAARGTYALSARAEAGMVTALSRVTPTDHLLAPCGALALSLASLPAAKAGLAALVIDILDPCVAVSVQELAHA</sequence>
<comment type="similarity">
    <text evidence="1">Belongs to the HupK family.</text>
</comment>